<feature type="chain" id="PRO_0000193398" description="Ubiquinone biosynthesis O-methyltransferase">
    <location>
        <begin position="1"/>
        <end position="289"/>
    </location>
</feature>
<feature type="domain" description="RPE1 insert">
    <location>
        <begin position="50"/>
        <end position="98"/>
    </location>
</feature>
<feature type="binding site" evidence="1">
    <location>
        <position position="36"/>
    </location>
    <ligand>
        <name>S-adenosyl-L-methionine</name>
        <dbReference type="ChEBI" id="CHEBI:59789"/>
    </ligand>
</feature>
<feature type="binding site" evidence="1">
    <location>
        <position position="109"/>
    </location>
    <ligand>
        <name>S-adenosyl-L-methionine</name>
        <dbReference type="ChEBI" id="CHEBI:59789"/>
    </ligand>
</feature>
<feature type="binding site" evidence="1">
    <location>
        <position position="130"/>
    </location>
    <ligand>
        <name>S-adenosyl-L-methionine</name>
        <dbReference type="ChEBI" id="CHEBI:59789"/>
    </ligand>
</feature>
<feature type="binding site" evidence="1">
    <location>
        <position position="172"/>
    </location>
    <ligand>
        <name>S-adenosyl-L-methionine</name>
        <dbReference type="ChEBI" id="CHEBI:59789"/>
    </ligand>
</feature>
<dbReference type="EC" id="2.1.1.222" evidence="1"/>
<dbReference type="EC" id="2.1.1.64" evidence="1"/>
<dbReference type="EMBL" id="AE006914">
    <property type="protein sequence ID" value="AAL03503.1"/>
    <property type="molecule type" value="Genomic_DNA"/>
</dbReference>
<dbReference type="PIR" id="E97820">
    <property type="entry name" value="E97820"/>
</dbReference>
<dbReference type="RefSeq" id="WP_010977560.1">
    <property type="nucleotide sequence ID" value="NC_003103.1"/>
</dbReference>
<dbReference type="SMR" id="Q92H07"/>
<dbReference type="GeneID" id="927809"/>
<dbReference type="KEGG" id="rco:RC0965"/>
<dbReference type="PATRIC" id="fig|272944.4.peg.1098"/>
<dbReference type="HOGENOM" id="CLU_042432_0_0_5"/>
<dbReference type="UniPathway" id="UPA00232"/>
<dbReference type="Proteomes" id="UP000000816">
    <property type="component" value="Chromosome"/>
</dbReference>
<dbReference type="GO" id="GO:0102208">
    <property type="term" value="F:2-polyprenyl-6-hydroxyphenol methylase activity"/>
    <property type="evidence" value="ECO:0007669"/>
    <property type="project" value="UniProtKB-EC"/>
</dbReference>
<dbReference type="GO" id="GO:0061542">
    <property type="term" value="F:3-demethylubiquinol 3-O-methyltransferase activity"/>
    <property type="evidence" value="ECO:0007669"/>
    <property type="project" value="UniProtKB-UniRule"/>
</dbReference>
<dbReference type="GO" id="GO:0010420">
    <property type="term" value="F:polyprenyldihydroxybenzoate methyltransferase activity"/>
    <property type="evidence" value="ECO:0007669"/>
    <property type="project" value="InterPro"/>
</dbReference>
<dbReference type="GO" id="GO:0032259">
    <property type="term" value="P:methylation"/>
    <property type="evidence" value="ECO:0007669"/>
    <property type="project" value="UniProtKB-KW"/>
</dbReference>
<dbReference type="CDD" id="cd02440">
    <property type="entry name" value="AdoMet_MTases"/>
    <property type="match status" value="1"/>
</dbReference>
<dbReference type="Gene3D" id="3.40.50.150">
    <property type="entry name" value="Vaccinia Virus protein VP39"/>
    <property type="match status" value="1"/>
</dbReference>
<dbReference type="HAMAP" id="MF_00472">
    <property type="entry name" value="UbiG"/>
    <property type="match status" value="1"/>
</dbReference>
<dbReference type="InterPro" id="IPR005728">
    <property type="entry name" value="RPE1"/>
</dbReference>
<dbReference type="InterPro" id="IPR029063">
    <property type="entry name" value="SAM-dependent_MTases_sf"/>
</dbReference>
<dbReference type="InterPro" id="IPR010233">
    <property type="entry name" value="UbiG_MeTrfase"/>
</dbReference>
<dbReference type="NCBIfam" id="TIGR01045">
    <property type="entry name" value="RPE1"/>
    <property type="match status" value="1"/>
</dbReference>
<dbReference type="NCBIfam" id="TIGR01983">
    <property type="entry name" value="UbiG"/>
    <property type="match status" value="1"/>
</dbReference>
<dbReference type="PANTHER" id="PTHR43464">
    <property type="entry name" value="METHYLTRANSFERASE"/>
    <property type="match status" value="1"/>
</dbReference>
<dbReference type="PANTHER" id="PTHR43464:SF19">
    <property type="entry name" value="UBIQUINONE BIOSYNTHESIS O-METHYLTRANSFERASE, MITOCHONDRIAL"/>
    <property type="match status" value="1"/>
</dbReference>
<dbReference type="Pfam" id="PF13489">
    <property type="entry name" value="Methyltransf_23"/>
    <property type="match status" value="1"/>
</dbReference>
<dbReference type="SUPFAM" id="SSF53335">
    <property type="entry name" value="S-adenosyl-L-methionine-dependent methyltransferases"/>
    <property type="match status" value="1"/>
</dbReference>
<organism>
    <name type="scientific">Rickettsia conorii (strain ATCC VR-613 / Malish 7)</name>
    <dbReference type="NCBI Taxonomy" id="272944"/>
    <lineage>
        <taxon>Bacteria</taxon>
        <taxon>Pseudomonadati</taxon>
        <taxon>Pseudomonadota</taxon>
        <taxon>Alphaproteobacteria</taxon>
        <taxon>Rickettsiales</taxon>
        <taxon>Rickettsiaceae</taxon>
        <taxon>Rickettsieae</taxon>
        <taxon>Rickettsia</taxon>
        <taxon>spotted fever group</taxon>
    </lineage>
</organism>
<proteinExistence type="inferred from homology"/>
<accession>Q92H07</accession>
<protein>
    <recommendedName>
        <fullName evidence="1">Ubiquinone biosynthesis O-methyltransferase</fullName>
    </recommendedName>
    <alternativeName>
        <fullName evidence="1">2-polyprenyl-6-hydroxyphenol methylase</fullName>
        <ecNumber evidence="1">2.1.1.222</ecNumber>
    </alternativeName>
    <alternativeName>
        <fullName evidence="1">3-demethylubiquinone 3-O-methyltransferase</fullName>
        <ecNumber evidence="1">2.1.1.64</ecNumber>
    </alternativeName>
</protein>
<sequence length="289" mass="33074">MSSIDKKELEKFEKISHNWWNKDGEFGILHRINPIRLEYIIEKITTHYNRHLSKLTYREELVGNMQHSTAAYALVREDASSRLTHKLPLEAEFEKMSNDISKLEILDVGCGGGLIATPLAAQGFNVTAIDALQSNIETATAYAKENGVKINYLQSTIEELDSDKLYDVVICLEVIEHVENVQQFILNLVKHIKPNGMAIISTINRTKKAYILGIIVAEYILGWVPKNTHDYSKFLKPLEIYEMLTDTKIEIKELKGLVYDPAKNEWKLSDDIDVNYFMCLGRKSMCYPS</sequence>
<name>UBIG_RICCN</name>
<gene>
    <name evidence="1" type="primary">ubiG</name>
    <name type="ordered locus">RC0965</name>
</gene>
<keyword id="KW-0489">Methyltransferase</keyword>
<keyword id="KW-0949">S-adenosyl-L-methionine</keyword>
<keyword id="KW-0808">Transferase</keyword>
<keyword id="KW-0831">Ubiquinone biosynthesis</keyword>
<comment type="function">
    <text evidence="1">O-methyltransferase that catalyzes the 2 O-methylation steps in the ubiquinone biosynthetic pathway.</text>
</comment>
<comment type="catalytic activity">
    <reaction evidence="1">
        <text>a 3-demethylubiquinol + S-adenosyl-L-methionine = a ubiquinol + S-adenosyl-L-homocysteine + H(+)</text>
        <dbReference type="Rhea" id="RHEA:44380"/>
        <dbReference type="Rhea" id="RHEA-COMP:9566"/>
        <dbReference type="Rhea" id="RHEA-COMP:10914"/>
        <dbReference type="ChEBI" id="CHEBI:15378"/>
        <dbReference type="ChEBI" id="CHEBI:17976"/>
        <dbReference type="ChEBI" id="CHEBI:57856"/>
        <dbReference type="ChEBI" id="CHEBI:59789"/>
        <dbReference type="ChEBI" id="CHEBI:84422"/>
        <dbReference type="EC" id="2.1.1.64"/>
    </reaction>
</comment>
<comment type="catalytic activity">
    <reaction evidence="1">
        <text>a 3-(all-trans-polyprenyl)benzene-1,2-diol + S-adenosyl-L-methionine = a 2-methoxy-6-(all-trans-polyprenyl)phenol + S-adenosyl-L-homocysteine + H(+)</text>
        <dbReference type="Rhea" id="RHEA:31411"/>
        <dbReference type="Rhea" id="RHEA-COMP:9550"/>
        <dbReference type="Rhea" id="RHEA-COMP:9551"/>
        <dbReference type="ChEBI" id="CHEBI:15378"/>
        <dbReference type="ChEBI" id="CHEBI:57856"/>
        <dbReference type="ChEBI" id="CHEBI:59789"/>
        <dbReference type="ChEBI" id="CHEBI:62729"/>
        <dbReference type="ChEBI" id="CHEBI:62731"/>
        <dbReference type="EC" id="2.1.1.222"/>
    </reaction>
</comment>
<comment type="pathway">
    <text evidence="1">Cofactor biosynthesis; ubiquinone biosynthesis.</text>
</comment>
<comment type="similarity">
    <text evidence="1">Belongs to the methyltransferase superfamily. UbiG/COQ3 family.</text>
</comment>
<evidence type="ECO:0000255" key="1">
    <source>
        <dbReference type="HAMAP-Rule" id="MF_00472"/>
    </source>
</evidence>
<reference key="1">
    <citation type="journal article" date="2001" name="Science">
        <title>Mechanisms of evolution in Rickettsia conorii and R. prowazekii.</title>
        <authorList>
            <person name="Ogata H."/>
            <person name="Audic S."/>
            <person name="Renesto-Audiffren P."/>
            <person name="Fournier P.-E."/>
            <person name="Barbe V."/>
            <person name="Samson D."/>
            <person name="Roux V."/>
            <person name="Cossart P."/>
            <person name="Weissenbach J."/>
            <person name="Claverie J.-M."/>
            <person name="Raoult D."/>
        </authorList>
    </citation>
    <scope>NUCLEOTIDE SEQUENCE [LARGE SCALE GENOMIC DNA]</scope>
    <source>
        <strain>ATCC VR-613 / Malish 7</strain>
    </source>
</reference>